<gene>
    <name type="primary">MT-CYB</name>
    <name type="synonym">COB</name>
    <name type="synonym">CYTB</name>
    <name type="synonym">MTCYB</name>
</gene>
<sequence length="379" mass="42645">MTNLRKTHPLMKIVNSSFIDLPAPSNISSWWNFGSLLGVCLIIQILTGLFLAMHYTSDTMTAFSSVTHICRDVNYGWLIRYLHANGASMFFICLFLHVGRGLYYGSYMYLETWNIGVLLLFAVMATAFMGYVLPWGQMSFWGATVITNLLSAIPYIGSDLVEWIWGGFSVDKATLTRFFAFHFILPFIIAALAGVHLLFLHETGSNNPSGLCSDADKIPFHPYYTIKDILGVLLLILTLTSLVLFSPDLLGDPDNYMPANPLNTPPHIKPEWYFLFAYAILRSIPNKLGGVLALALSILILAVVPFLHTSKQRSMMFRPFSQCLFWILVADLLTLTWIGGQPVEHPFIIIGQLASILYFLLILVIMPITSLFENNLLKW</sequence>
<name>CYB_SORAR</name>
<keyword id="KW-0249">Electron transport</keyword>
<keyword id="KW-0349">Heme</keyword>
<keyword id="KW-0408">Iron</keyword>
<keyword id="KW-0472">Membrane</keyword>
<keyword id="KW-0479">Metal-binding</keyword>
<keyword id="KW-0496">Mitochondrion</keyword>
<keyword id="KW-0999">Mitochondrion inner membrane</keyword>
<keyword id="KW-0679">Respiratory chain</keyword>
<keyword id="KW-0812">Transmembrane</keyword>
<keyword id="KW-1133">Transmembrane helix</keyword>
<keyword id="KW-0813">Transport</keyword>
<keyword id="KW-0830">Ubiquinone</keyword>
<dbReference type="EMBL" id="AJ245893">
    <property type="protein sequence ID" value="CAB71157.1"/>
    <property type="molecule type" value="Genomic_DNA"/>
</dbReference>
<dbReference type="EMBL" id="AJ312028">
    <property type="protein sequence ID" value="CAC84886.1"/>
    <property type="molecule type" value="Genomic_DNA"/>
</dbReference>
<dbReference type="EMBL" id="AJ312029">
    <property type="protein sequence ID" value="CAC84887.1"/>
    <property type="molecule type" value="Genomic_DNA"/>
</dbReference>
<dbReference type="EMBL" id="AJ312030">
    <property type="protein sequence ID" value="CAC84888.1"/>
    <property type="molecule type" value="Genomic_DNA"/>
</dbReference>
<dbReference type="EMBL" id="AJ312031">
    <property type="protein sequence ID" value="CAC84889.1"/>
    <property type="molecule type" value="Genomic_DNA"/>
</dbReference>
<dbReference type="EMBL" id="AJ312032">
    <property type="protein sequence ID" value="CAC84890.1"/>
    <property type="molecule type" value="Genomic_DNA"/>
</dbReference>
<dbReference type="EMBL" id="AJ312033">
    <property type="protein sequence ID" value="CAC84891.1"/>
    <property type="molecule type" value="Genomic_DNA"/>
</dbReference>
<dbReference type="EMBL" id="AJ312034">
    <property type="protein sequence ID" value="CAC84892.1"/>
    <property type="molecule type" value="Genomic_DNA"/>
</dbReference>
<dbReference type="EMBL" id="AJ312035">
    <property type="protein sequence ID" value="CAC84893.1"/>
    <property type="molecule type" value="Genomic_DNA"/>
</dbReference>
<dbReference type="EMBL" id="AJ312036">
    <property type="protein sequence ID" value="CAC84894.1"/>
    <property type="molecule type" value="Genomic_DNA"/>
</dbReference>
<dbReference type="EMBL" id="AJ312037">
    <property type="protein sequence ID" value="CAC84895.1"/>
    <property type="molecule type" value="Genomic_DNA"/>
</dbReference>
<dbReference type="EMBL" id="AJ312038">
    <property type="protein sequence ID" value="CAC84896.1"/>
    <property type="molecule type" value="Genomic_DNA"/>
</dbReference>
<dbReference type="EMBL" id="AJ312039">
    <property type="protein sequence ID" value="CAC84897.1"/>
    <property type="molecule type" value="Genomic_DNA"/>
</dbReference>
<dbReference type="EMBL" id="AJ312040">
    <property type="protein sequence ID" value="CAC84898.1"/>
    <property type="molecule type" value="Genomic_DNA"/>
</dbReference>
<dbReference type="EMBL" id="AJ000415">
    <property type="protein sequence ID" value="CAA04063.2"/>
    <property type="molecule type" value="Genomic_DNA"/>
</dbReference>
<dbReference type="EMBL" id="AJ000416">
    <property type="protein sequence ID" value="CAA04064.2"/>
    <property type="molecule type" value="Genomic_DNA"/>
</dbReference>
<dbReference type="EMBL" id="D85351">
    <property type="protein sequence ID" value="BAA21344.1"/>
    <property type="molecule type" value="Genomic_DNA"/>
</dbReference>
<dbReference type="SMR" id="O79445"/>
<dbReference type="GO" id="GO:0005743">
    <property type="term" value="C:mitochondrial inner membrane"/>
    <property type="evidence" value="ECO:0007669"/>
    <property type="project" value="UniProtKB-SubCell"/>
</dbReference>
<dbReference type="GO" id="GO:0045275">
    <property type="term" value="C:respiratory chain complex III"/>
    <property type="evidence" value="ECO:0007669"/>
    <property type="project" value="InterPro"/>
</dbReference>
<dbReference type="GO" id="GO:0046872">
    <property type="term" value="F:metal ion binding"/>
    <property type="evidence" value="ECO:0007669"/>
    <property type="project" value="UniProtKB-KW"/>
</dbReference>
<dbReference type="GO" id="GO:0008121">
    <property type="term" value="F:ubiquinol-cytochrome-c reductase activity"/>
    <property type="evidence" value="ECO:0007669"/>
    <property type="project" value="InterPro"/>
</dbReference>
<dbReference type="GO" id="GO:0006122">
    <property type="term" value="P:mitochondrial electron transport, ubiquinol to cytochrome c"/>
    <property type="evidence" value="ECO:0007669"/>
    <property type="project" value="TreeGrafter"/>
</dbReference>
<dbReference type="CDD" id="cd00290">
    <property type="entry name" value="cytochrome_b_C"/>
    <property type="match status" value="1"/>
</dbReference>
<dbReference type="CDD" id="cd00284">
    <property type="entry name" value="Cytochrome_b_N"/>
    <property type="match status" value="1"/>
</dbReference>
<dbReference type="FunFam" id="1.20.810.10:FF:000002">
    <property type="entry name" value="Cytochrome b"/>
    <property type="match status" value="1"/>
</dbReference>
<dbReference type="Gene3D" id="1.20.810.10">
    <property type="entry name" value="Cytochrome Bc1 Complex, Chain C"/>
    <property type="match status" value="1"/>
</dbReference>
<dbReference type="InterPro" id="IPR005798">
    <property type="entry name" value="Cyt_b/b6_C"/>
</dbReference>
<dbReference type="InterPro" id="IPR036150">
    <property type="entry name" value="Cyt_b/b6_C_sf"/>
</dbReference>
<dbReference type="InterPro" id="IPR005797">
    <property type="entry name" value="Cyt_b/b6_N"/>
</dbReference>
<dbReference type="InterPro" id="IPR027387">
    <property type="entry name" value="Cytb/b6-like_sf"/>
</dbReference>
<dbReference type="InterPro" id="IPR030689">
    <property type="entry name" value="Cytochrome_b"/>
</dbReference>
<dbReference type="InterPro" id="IPR048260">
    <property type="entry name" value="Cytochrome_b_C_euk/bac"/>
</dbReference>
<dbReference type="InterPro" id="IPR048259">
    <property type="entry name" value="Cytochrome_b_N_euk/bac"/>
</dbReference>
<dbReference type="InterPro" id="IPR016174">
    <property type="entry name" value="Di-haem_cyt_TM"/>
</dbReference>
<dbReference type="PANTHER" id="PTHR19271">
    <property type="entry name" value="CYTOCHROME B"/>
    <property type="match status" value="1"/>
</dbReference>
<dbReference type="PANTHER" id="PTHR19271:SF16">
    <property type="entry name" value="CYTOCHROME B"/>
    <property type="match status" value="1"/>
</dbReference>
<dbReference type="Pfam" id="PF00032">
    <property type="entry name" value="Cytochrom_B_C"/>
    <property type="match status" value="1"/>
</dbReference>
<dbReference type="Pfam" id="PF00033">
    <property type="entry name" value="Cytochrome_B"/>
    <property type="match status" value="1"/>
</dbReference>
<dbReference type="PIRSF" id="PIRSF038885">
    <property type="entry name" value="COB"/>
    <property type="match status" value="1"/>
</dbReference>
<dbReference type="SUPFAM" id="SSF81648">
    <property type="entry name" value="a domain/subunit of cytochrome bc1 complex (Ubiquinol-cytochrome c reductase)"/>
    <property type="match status" value="1"/>
</dbReference>
<dbReference type="SUPFAM" id="SSF81342">
    <property type="entry name" value="Transmembrane di-heme cytochromes"/>
    <property type="match status" value="1"/>
</dbReference>
<dbReference type="PROSITE" id="PS51003">
    <property type="entry name" value="CYTB_CTER"/>
    <property type="match status" value="1"/>
</dbReference>
<dbReference type="PROSITE" id="PS51002">
    <property type="entry name" value="CYTB_NTER"/>
    <property type="match status" value="1"/>
</dbReference>
<comment type="function">
    <text evidence="2">Component of the ubiquinol-cytochrome c reductase complex (complex III or cytochrome b-c1 complex) that is part of the mitochondrial respiratory chain. The b-c1 complex mediates electron transfer from ubiquinol to cytochrome c. Contributes to the generation of a proton gradient across the mitochondrial membrane that is then used for ATP synthesis.</text>
</comment>
<comment type="cofactor">
    <cofactor evidence="2">
        <name>heme b</name>
        <dbReference type="ChEBI" id="CHEBI:60344"/>
    </cofactor>
    <text evidence="2">Binds 2 heme b groups non-covalently.</text>
</comment>
<comment type="subunit">
    <text evidence="2">The cytochrome bc1 complex contains 11 subunits: 3 respiratory subunits (MT-CYB, CYC1 and UQCRFS1), 2 core proteins (UQCRC1 and UQCRC2) and 6 low-molecular weight proteins (UQCRH/QCR6, UQCRB/QCR7, UQCRQ/QCR8, UQCR10/QCR9, UQCR11/QCR10 and a cleavage product of UQCRFS1). This cytochrome bc1 complex then forms a dimer.</text>
</comment>
<comment type="subcellular location">
    <subcellularLocation>
        <location evidence="2">Mitochondrion inner membrane</location>
        <topology evidence="2">Multi-pass membrane protein</topology>
    </subcellularLocation>
</comment>
<comment type="miscellaneous">
    <text evidence="1">Heme 1 (or BL or b562) is low-potential and absorbs at about 562 nm, and heme 2 (or BH or b566) is high-potential and absorbs at about 566 nm.</text>
</comment>
<comment type="similarity">
    <text evidence="3 4">Belongs to the cytochrome b family.</text>
</comment>
<comment type="caution">
    <text evidence="2">The full-length protein contains only eight transmembrane helices, not nine as predicted by bioinformatics tools.</text>
</comment>
<feature type="chain" id="PRO_0000061550" description="Cytochrome b">
    <location>
        <begin position="1"/>
        <end position="379"/>
    </location>
</feature>
<feature type="transmembrane region" description="Helical" evidence="2">
    <location>
        <begin position="33"/>
        <end position="53"/>
    </location>
</feature>
<feature type="transmembrane region" description="Helical" evidence="2">
    <location>
        <begin position="77"/>
        <end position="98"/>
    </location>
</feature>
<feature type="transmembrane region" description="Helical" evidence="2">
    <location>
        <begin position="113"/>
        <end position="133"/>
    </location>
</feature>
<feature type="transmembrane region" description="Helical" evidence="2">
    <location>
        <begin position="178"/>
        <end position="198"/>
    </location>
</feature>
<feature type="transmembrane region" description="Helical" evidence="2">
    <location>
        <begin position="226"/>
        <end position="246"/>
    </location>
</feature>
<feature type="transmembrane region" description="Helical" evidence="2">
    <location>
        <begin position="288"/>
        <end position="308"/>
    </location>
</feature>
<feature type="transmembrane region" description="Helical" evidence="2">
    <location>
        <begin position="320"/>
        <end position="340"/>
    </location>
</feature>
<feature type="transmembrane region" description="Helical" evidence="2">
    <location>
        <begin position="347"/>
        <end position="367"/>
    </location>
</feature>
<feature type="binding site" description="axial binding residue" evidence="2">
    <location>
        <position position="83"/>
    </location>
    <ligand>
        <name>heme b</name>
        <dbReference type="ChEBI" id="CHEBI:60344"/>
        <label>b562</label>
    </ligand>
    <ligandPart>
        <name>Fe</name>
        <dbReference type="ChEBI" id="CHEBI:18248"/>
    </ligandPart>
</feature>
<feature type="binding site" description="axial binding residue" evidence="2">
    <location>
        <position position="97"/>
    </location>
    <ligand>
        <name>heme b</name>
        <dbReference type="ChEBI" id="CHEBI:60344"/>
        <label>b566</label>
    </ligand>
    <ligandPart>
        <name>Fe</name>
        <dbReference type="ChEBI" id="CHEBI:18248"/>
    </ligandPart>
</feature>
<feature type="binding site" description="axial binding residue" evidence="2">
    <location>
        <position position="182"/>
    </location>
    <ligand>
        <name>heme b</name>
        <dbReference type="ChEBI" id="CHEBI:60344"/>
        <label>b562</label>
    </ligand>
    <ligandPart>
        <name>Fe</name>
        <dbReference type="ChEBI" id="CHEBI:18248"/>
    </ligandPart>
</feature>
<feature type="binding site" description="axial binding residue" evidence="2">
    <location>
        <position position="196"/>
    </location>
    <ligand>
        <name>heme b</name>
        <dbReference type="ChEBI" id="CHEBI:60344"/>
        <label>b566</label>
    </ligand>
    <ligandPart>
        <name>Fe</name>
        <dbReference type="ChEBI" id="CHEBI:18248"/>
    </ligandPart>
</feature>
<feature type="binding site" evidence="2">
    <location>
        <position position="201"/>
    </location>
    <ligand>
        <name>a ubiquinone</name>
        <dbReference type="ChEBI" id="CHEBI:16389"/>
    </ligand>
</feature>
<feature type="sequence variant" description="In strain: Isolate IZEA-6137.">
    <original>S</original>
    <variation>N</variation>
    <location>
        <position position="16"/>
    </location>
</feature>
<feature type="sequence variant" description="In strain: Isolate IZEA-6137.">
    <original>A</original>
    <variation>T</variation>
    <location>
        <position position="122"/>
    </location>
</feature>
<feature type="sequence variant" description="In strain: Isolate IZEA-5339.">
    <original>G</original>
    <variation>A</variation>
    <location>
        <position position="194"/>
    </location>
</feature>
<feature type="sequence variant" description="In strain: Isolate IZEA-5326, Isolate IZEA-5381 and Isolate IZEA-5561.">
    <original>L</original>
    <variation>F</variation>
    <location>
        <position position="234"/>
    </location>
</feature>
<feature type="sequence variant" description="In strain: Isolate IZEA-3303, Isolate IZEA-5326, Isolate IZEA-5339, Isolate IZEA-5381, Isolate IZEA-5561, Isolate San Rhemy and Isolate SI-91.4.">
    <original>T</original>
    <variation>A</variation>
    <location>
        <position position="238"/>
    </location>
</feature>
<feature type="sequence variant" description="In strain: Isolate IZEA-2887, Isolate IZEA-3303, Isolate IZEA-3383, Isolate IZEA-5326, Isolate IZEA-5339, Isolate IZEA-5381, Isolate IZEA-5561, Isolate IZEA-6137, Isolate JS3032, Isolate JZ665, Isolate JZ835, Isolate San Rhemy and Isolate SI-91.4.">
    <original>M</original>
    <variation>T</variation>
    <location>
        <position position="257"/>
    </location>
</feature>
<feature type="sequence variant" description="In strain: Isolate IZEA-2887, Isolate IZEA-3303, Isolate IZEA-3383, Isolate IZEA-IZEA-5326, Isolate IZEA-5339, Isolate IZEA-5381, Isolate IZEA-5561, Isolate IZEA-6137, Isolate JS3032, Isolate JZ665, Isolate JZ835, Isolate San Rhemy and Isolate SI-91.4.">
    <original>A</original>
    <variation>V</variation>
    <location>
        <position position="295"/>
    </location>
</feature>
<feature type="sequence variant" description="In strain: Isolate IZEA-5381 and Isolate JS3032.">
    <original>W</original>
    <variation>WK</variation>
    <location>
        <position position="379"/>
    </location>
</feature>
<protein>
    <recommendedName>
        <fullName>Cytochrome b</fullName>
    </recommendedName>
    <alternativeName>
        <fullName>Complex III subunit 3</fullName>
    </alternativeName>
    <alternativeName>
        <fullName>Complex III subunit III</fullName>
    </alternativeName>
    <alternativeName>
        <fullName>Cytochrome b-c1 complex subunit 3</fullName>
    </alternativeName>
    <alternativeName>
        <fullName>Ubiquinol-cytochrome-c reductase complex cytochrome b subunit</fullName>
    </alternativeName>
</protein>
<reference key="1">
    <citation type="journal article" date="2000" name="Mol. Biol. Evol.">
        <title>The phylogenetic position of the Talpidae within Eutheria based on analysis of complete mitochondrial sequences.</title>
        <authorList>
            <person name="Mouchaty S.K."/>
            <person name="Gullberg A."/>
            <person name="Janke A."/>
            <person name="Arnason U."/>
        </authorList>
    </citation>
    <scope>NUCLEOTIDE SEQUENCE [GENOMIC DNA]</scope>
</reference>
<reference key="2">
    <citation type="journal article" date="2002" name="Acta Theriol.">
        <title>A taxonomical revaluation of the chromosome race Valais of the common shrew, Sorex araneus (Insectivora: Soricidae).</title>
        <authorList>
            <person name="Brunner H."/>
            <person name="Lugon-Moulin N."/>
            <person name="Balloux F."/>
            <person name="Fumagalli L."/>
            <person name="Hausser J."/>
        </authorList>
    </citation>
    <scope>NUCLEOTIDE SEQUENCE [GENOMIC DNA]</scope>
    <scope>VARIANTS</scope>
    <source>
        <strain>Isolate IZEA-2887</strain>
        <strain>Isolate IZEA-3303</strain>
        <strain>Isolate IZEA-3383</strain>
        <strain>Isolate IZEA-5326</strain>
        <strain>Isolate IZEA-5339</strain>
        <strain>Isolate IZEA-5381</strain>
        <strain>Isolate IZEA-5561</strain>
        <strain>Isolate IZEA-6137</strain>
        <strain>Isolate JS3032</strain>
        <strain>Isolate JZ665</strain>
        <strain>Isolate JZ835</strain>
        <strain>Isolate San Rhemy</strain>
        <strain>Isolate Si-91.4</strain>
    </source>
</reference>
<reference key="3">
    <citation type="journal article" date="1999" name="Mol. Phylogenet. Evol.">
        <title>Molecular phylogeny and evolution of Sorex shrews (Soricidae: Insectivora) inferred from mitochondrial DNA sequence data.</title>
        <authorList>
            <person name="Fumagalli L."/>
            <person name="Taberlet P."/>
            <person name="Stewart D.T."/>
            <person name="Gielly L."/>
            <person name="Hausser J."/>
            <person name="Vogel P."/>
        </authorList>
    </citation>
    <scope>NUCLEOTIDE SEQUENCE [GENOMIC DNA] OF 44-379</scope>
</reference>
<reference key="4">
    <citation type="journal article" date="1997" name="Zool. Sci.">
        <title>Molecular phylogeny from nucleotide sequences of the mitochondrial cytochrome b gene and evolutionary history of Eurasian soricine shrews (Mammalia, Insectivora).</title>
        <authorList>
            <person name="Ohdachi S."/>
            <person name="Masuda R."/>
            <person name="Abe H."/>
            <person name="Adachi J."/>
            <person name="Dokuchaev N.E."/>
            <person name="Haukisalmi V."/>
            <person name="Yoshida M.C."/>
        </authorList>
    </citation>
    <scope>NUCLEOTIDE SEQUENCE [GENOMIC DNA] OF 1-134</scope>
    <source>
        <strain>Isolate #361</strain>
        <tissue>Liver</tissue>
    </source>
</reference>
<geneLocation type="mitochondrion"/>
<organism>
    <name type="scientific">Sorex araneus</name>
    <name type="common">Eurasian common shrew</name>
    <name type="synonym">European shrew</name>
    <dbReference type="NCBI Taxonomy" id="42254"/>
    <lineage>
        <taxon>Eukaryota</taxon>
        <taxon>Metazoa</taxon>
        <taxon>Chordata</taxon>
        <taxon>Craniata</taxon>
        <taxon>Vertebrata</taxon>
        <taxon>Euteleostomi</taxon>
        <taxon>Mammalia</taxon>
        <taxon>Eutheria</taxon>
        <taxon>Laurasiatheria</taxon>
        <taxon>Eulipotyphla</taxon>
        <taxon>Soricidae</taxon>
        <taxon>Soricinae</taxon>
        <taxon>Sorex</taxon>
    </lineage>
</organism>
<accession>O79445</accession>
<accession>O21393</accession>
<accession>Q8W7T3</accession>
<accession>Q8W857</accession>
<accession>Q8W9E0</accession>
<accession>Q8W9E1</accession>
<accession>Q8W9E2</accession>
<accession>Q8W9E3</accession>
<accession>Q9MJQ6</accession>
<proteinExistence type="inferred from homology"/>
<evidence type="ECO:0000250" key="1"/>
<evidence type="ECO:0000250" key="2">
    <source>
        <dbReference type="UniProtKB" id="P00157"/>
    </source>
</evidence>
<evidence type="ECO:0000255" key="3">
    <source>
        <dbReference type="PROSITE-ProRule" id="PRU00967"/>
    </source>
</evidence>
<evidence type="ECO:0000255" key="4">
    <source>
        <dbReference type="PROSITE-ProRule" id="PRU00968"/>
    </source>
</evidence>